<gene>
    <name evidence="1" type="primary">leuS</name>
    <name type="ordered locus">GbCGDNIH1_0005</name>
</gene>
<evidence type="ECO:0000255" key="1">
    <source>
        <dbReference type="HAMAP-Rule" id="MF_00049"/>
    </source>
</evidence>
<accession>Q0BW99</accession>
<reference key="1">
    <citation type="journal article" date="2007" name="J. Bacteriol.">
        <title>Genome sequence analysis of the emerging human pathogenic acetic acid bacterium Granulibacter bethesdensis.</title>
        <authorList>
            <person name="Greenberg D.E."/>
            <person name="Porcella S.F."/>
            <person name="Zelazny A.M."/>
            <person name="Virtaneva K."/>
            <person name="Sturdevant D.E."/>
            <person name="Kupko J.J. III"/>
            <person name="Barbian K.D."/>
            <person name="Babar A."/>
            <person name="Dorward D.W."/>
            <person name="Holland S.M."/>
        </authorList>
    </citation>
    <scope>NUCLEOTIDE SEQUENCE [LARGE SCALE GENOMIC DNA]</scope>
    <source>
        <strain>ATCC BAA-1260 / CGDNIH1</strain>
    </source>
</reference>
<comment type="catalytic activity">
    <reaction evidence="1">
        <text>tRNA(Leu) + L-leucine + ATP = L-leucyl-tRNA(Leu) + AMP + diphosphate</text>
        <dbReference type="Rhea" id="RHEA:11688"/>
        <dbReference type="Rhea" id="RHEA-COMP:9613"/>
        <dbReference type="Rhea" id="RHEA-COMP:9622"/>
        <dbReference type="ChEBI" id="CHEBI:30616"/>
        <dbReference type="ChEBI" id="CHEBI:33019"/>
        <dbReference type="ChEBI" id="CHEBI:57427"/>
        <dbReference type="ChEBI" id="CHEBI:78442"/>
        <dbReference type="ChEBI" id="CHEBI:78494"/>
        <dbReference type="ChEBI" id="CHEBI:456215"/>
        <dbReference type="EC" id="6.1.1.4"/>
    </reaction>
</comment>
<comment type="subcellular location">
    <subcellularLocation>
        <location evidence="1">Cytoplasm</location>
    </subcellularLocation>
</comment>
<comment type="similarity">
    <text evidence="1">Belongs to the class-I aminoacyl-tRNA synthetase family.</text>
</comment>
<proteinExistence type="inferred from homology"/>
<keyword id="KW-0030">Aminoacyl-tRNA synthetase</keyword>
<keyword id="KW-0067">ATP-binding</keyword>
<keyword id="KW-0963">Cytoplasm</keyword>
<keyword id="KW-0436">Ligase</keyword>
<keyword id="KW-0547">Nucleotide-binding</keyword>
<keyword id="KW-0648">Protein biosynthesis</keyword>
<keyword id="KW-1185">Reference proteome</keyword>
<sequence length="875" mass="97795">MTDSITDLQSDQRPDRSYDFASAERRWQLAWTERACFTVPDVPDPGARTYYVLEMFPYPSGQIHMGHVRNYTLGDVVARYKRAQGYQVLHPMGWDAFGLPAENAARERGVHPGQWTWNNIAAMRGELQRMGLSITWEREFATCDPSYYGHQQALFLDFLKKNLVERRESWVNWDPVDETVLANEQVIDGKGWRSGAPVERKKLSQWFLRITDYAEELLAGLDQLDRWPERVRVMQSRWIGRSEGARLRFPLVEPLGDQREIEVYTTRPDTLYGMSFVAIAADHPVAAALAAHHPALAAFVAECRSLGTSEAAIEAAEKRGFDTGLRVKHPFCDETFPVWIANFVLMDYGTGAVFGCPAHDQRDLDFARKYDLSVTPVVLPSDQDAASFTIGRKAYDGDGILFNSGPFDGLTPDAARREAITRLEAMGWGQGVTNWRLRDWGVSRQRYWGCPIPIIHCDQCGPVPVPADQLPVTLPEDVTFDRPGNPLDHHPSWKHVTCPSCGAAAVRETDTFDTFVDSSWYFARFASPHAHVPVLKEAAQNWLPVDQYIGGIEHAILHLLYARFFTRAMADTGHVPVREPFAGLFTQGMVTHESYRAADGRWLSPVEVTRHGETVVETATGEPVQVGRGEKMSKSKRNTVAPGEIFNRYGADAARWFILSDNPPERDMEWTDAGAVGAYRFVQRLYRLAEAVARIAKEETNRDDASSDAAMTLRRMTHRTVAAVTEALEGFNFNVAVARVYEFANALTEAEKKAAEPGMTAARVEAITLLSRIIAPMMPHLAEEMATLIEQGPKLVAEQVWPSADPALLVVQSVTIAIQVMGKLRATLDISPDADQDSVIAQAEADPNVVRALEGKRVVKRIYVPNRIVNFVIAG</sequence>
<name>SYL_GRABC</name>
<dbReference type="EC" id="6.1.1.4" evidence="1"/>
<dbReference type="EMBL" id="CP000394">
    <property type="protein sequence ID" value="ABI60903.1"/>
    <property type="molecule type" value="Genomic_DNA"/>
</dbReference>
<dbReference type="RefSeq" id="WP_011630713.1">
    <property type="nucleotide sequence ID" value="NC_008343.2"/>
</dbReference>
<dbReference type="SMR" id="Q0BW99"/>
<dbReference type="STRING" id="391165.GbCGDNIH1_0005"/>
<dbReference type="KEGG" id="gbe:GbCGDNIH1_0005"/>
<dbReference type="eggNOG" id="COG0495">
    <property type="taxonomic scope" value="Bacteria"/>
</dbReference>
<dbReference type="HOGENOM" id="CLU_004427_0_0_5"/>
<dbReference type="OrthoDB" id="9810365at2"/>
<dbReference type="Proteomes" id="UP000001963">
    <property type="component" value="Chromosome"/>
</dbReference>
<dbReference type="GO" id="GO:0005829">
    <property type="term" value="C:cytosol"/>
    <property type="evidence" value="ECO:0007669"/>
    <property type="project" value="TreeGrafter"/>
</dbReference>
<dbReference type="GO" id="GO:0002161">
    <property type="term" value="F:aminoacyl-tRNA deacylase activity"/>
    <property type="evidence" value="ECO:0007669"/>
    <property type="project" value="InterPro"/>
</dbReference>
<dbReference type="GO" id="GO:0005524">
    <property type="term" value="F:ATP binding"/>
    <property type="evidence" value="ECO:0007669"/>
    <property type="project" value="UniProtKB-UniRule"/>
</dbReference>
<dbReference type="GO" id="GO:0004823">
    <property type="term" value="F:leucine-tRNA ligase activity"/>
    <property type="evidence" value="ECO:0007669"/>
    <property type="project" value="UniProtKB-UniRule"/>
</dbReference>
<dbReference type="GO" id="GO:0006429">
    <property type="term" value="P:leucyl-tRNA aminoacylation"/>
    <property type="evidence" value="ECO:0007669"/>
    <property type="project" value="UniProtKB-UniRule"/>
</dbReference>
<dbReference type="CDD" id="cd07958">
    <property type="entry name" value="Anticodon_Ia_Leu_BEm"/>
    <property type="match status" value="1"/>
</dbReference>
<dbReference type="CDD" id="cd00812">
    <property type="entry name" value="LeuRS_core"/>
    <property type="match status" value="1"/>
</dbReference>
<dbReference type="FunFam" id="1.10.730.10:FF:000002">
    <property type="entry name" value="Leucine--tRNA ligase"/>
    <property type="match status" value="1"/>
</dbReference>
<dbReference type="Gene3D" id="2.20.28.290">
    <property type="match status" value="1"/>
</dbReference>
<dbReference type="Gene3D" id="3.10.20.590">
    <property type="match status" value="1"/>
</dbReference>
<dbReference type="Gene3D" id="3.40.50.620">
    <property type="entry name" value="HUPs"/>
    <property type="match status" value="2"/>
</dbReference>
<dbReference type="Gene3D" id="1.10.730.10">
    <property type="entry name" value="Isoleucyl-tRNA Synthetase, Domain 1"/>
    <property type="match status" value="2"/>
</dbReference>
<dbReference type="Gene3D" id="3.90.740.10">
    <property type="entry name" value="Valyl/Leucyl/Isoleucyl-tRNA synthetase, editing domain"/>
    <property type="match status" value="1"/>
</dbReference>
<dbReference type="HAMAP" id="MF_00049_B">
    <property type="entry name" value="Leu_tRNA_synth_B"/>
    <property type="match status" value="1"/>
</dbReference>
<dbReference type="InterPro" id="IPR001412">
    <property type="entry name" value="aa-tRNA-synth_I_CS"/>
</dbReference>
<dbReference type="InterPro" id="IPR002300">
    <property type="entry name" value="aa-tRNA-synth_Ia"/>
</dbReference>
<dbReference type="InterPro" id="IPR002302">
    <property type="entry name" value="Leu-tRNA-ligase"/>
</dbReference>
<dbReference type="InterPro" id="IPR025709">
    <property type="entry name" value="Leu_tRNA-synth_edit"/>
</dbReference>
<dbReference type="InterPro" id="IPR013155">
    <property type="entry name" value="M/V/L/I-tRNA-synth_anticd-bd"/>
</dbReference>
<dbReference type="InterPro" id="IPR015413">
    <property type="entry name" value="Methionyl/Leucyl_tRNA_Synth"/>
</dbReference>
<dbReference type="InterPro" id="IPR014729">
    <property type="entry name" value="Rossmann-like_a/b/a_fold"/>
</dbReference>
<dbReference type="InterPro" id="IPR009080">
    <property type="entry name" value="tRNAsynth_Ia_anticodon-bd"/>
</dbReference>
<dbReference type="InterPro" id="IPR009008">
    <property type="entry name" value="Val/Leu/Ile-tRNA-synth_edit"/>
</dbReference>
<dbReference type="NCBIfam" id="TIGR00396">
    <property type="entry name" value="leuS_bact"/>
    <property type="match status" value="1"/>
</dbReference>
<dbReference type="PANTHER" id="PTHR43740:SF2">
    <property type="entry name" value="LEUCINE--TRNA LIGASE, MITOCHONDRIAL"/>
    <property type="match status" value="1"/>
</dbReference>
<dbReference type="PANTHER" id="PTHR43740">
    <property type="entry name" value="LEUCYL-TRNA SYNTHETASE"/>
    <property type="match status" value="1"/>
</dbReference>
<dbReference type="Pfam" id="PF08264">
    <property type="entry name" value="Anticodon_1"/>
    <property type="match status" value="1"/>
</dbReference>
<dbReference type="Pfam" id="PF00133">
    <property type="entry name" value="tRNA-synt_1"/>
    <property type="match status" value="2"/>
</dbReference>
<dbReference type="Pfam" id="PF13603">
    <property type="entry name" value="tRNA-synt_1_2"/>
    <property type="match status" value="1"/>
</dbReference>
<dbReference type="Pfam" id="PF09334">
    <property type="entry name" value="tRNA-synt_1g"/>
    <property type="match status" value="1"/>
</dbReference>
<dbReference type="PRINTS" id="PR00985">
    <property type="entry name" value="TRNASYNTHLEU"/>
</dbReference>
<dbReference type="SUPFAM" id="SSF47323">
    <property type="entry name" value="Anticodon-binding domain of a subclass of class I aminoacyl-tRNA synthetases"/>
    <property type="match status" value="1"/>
</dbReference>
<dbReference type="SUPFAM" id="SSF52374">
    <property type="entry name" value="Nucleotidylyl transferase"/>
    <property type="match status" value="1"/>
</dbReference>
<dbReference type="SUPFAM" id="SSF50677">
    <property type="entry name" value="ValRS/IleRS/LeuRS editing domain"/>
    <property type="match status" value="1"/>
</dbReference>
<dbReference type="PROSITE" id="PS00178">
    <property type="entry name" value="AA_TRNA_LIGASE_I"/>
    <property type="match status" value="1"/>
</dbReference>
<organism>
    <name type="scientific">Granulibacter bethesdensis (strain ATCC BAA-1260 / CGDNIH1)</name>
    <dbReference type="NCBI Taxonomy" id="391165"/>
    <lineage>
        <taxon>Bacteria</taxon>
        <taxon>Pseudomonadati</taxon>
        <taxon>Pseudomonadota</taxon>
        <taxon>Alphaproteobacteria</taxon>
        <taxon>Acetobacterales</taxon>
        <taxon>Acetobacteraceae</taxon>
        <taxon>Granulibacter</taxon>
    </lineage>
</organism>
<feature type="chain" id="PRO_0000334761" description="Leucine--tRNA ligase">
    <location>
        <begin position="1"/>
        <end position="875"/>
    </location>
</feature>
<feature type="short sequence motif" description="'HIGH' region">
    <location>
        <begin position="57"/>
        <end position="67"/>
    </location>
</feature>
<feature type="short sequence motif" description="'KMSKS' region">
    <location>
        <begin position="631"/>
        <end position="635"/>
    </location>
</feature>
<feature type="binding site" evidence="1">
    <location>
        <position position="634"/>
    </location>
    <ligand>
        <name>ATP</name>
        <dbReference type="ChEBI" id="CHEBI:30616"/>
    </ligand>
</feature>
<protein>
    <recommendedName>
        <fullName evidence="1">Leucine--tRNA ligase</fullName>
        <ecNumber evidence="1">6.1.1.4</ecNumber>
    </recommendedName>
    <alternativeName>
        <fullName evidence="1">Leucyl-tRNA synthetase</fullName>
        <shortName evidence="1">LeuRS</shortName>
    </alternativeName>
</protein>